<name>KA271_BUTIS</name>
<keyword id="KW-1015">Disulfide bond</keyword>
<keyword id="KW-0964">Secreted</keyword>
<keyword id="KW-0732">Signal</keyword>
<accession>B8XH44</accession>
<reference key="1">
    <citation type="submission" date="2008-10" db="EMBL/GenBank/DDBJ databases">
        <title>Buthus occitanus israelis scorpion toxin.</title>
        <authorList>
            <person name="Zilberberg N."/>
            <person name="Kozminsky-Atias A."/>
        </authorList>
    </citation>
    <scope>NUCLEOTIDE SEQUENCE [MRNA]</scope>
    <source>
        <tissue>Venom gland</tissue>
    </source>
</reference>
<reference key="2">
    <citation type="journal article" date="2014" name="BMC Genomics">
        <title>The Mediterranean scorpion Mesobuthus gibbosus (Scorpiones, Buthidae): transcriptome analysis and organization of the genome encoding chlorotoxin-like peptides.</title>
        <authorList>
            <person name="Diego-Garcia E."/>
            <person name="Caliskan F."/>
            <person name="Tytgat J."/>
        </authorList>
    </citation>
    <scope>NOMENCLATURE</scope>
</reference>
<comment type="subcellular location">
    <subcellularLocation>
        <location evidence="1">Secreted</location>
    </subcellularLocation>
</comment>
<comment type="tissue specificity">
    <text evidence="5">Expressed by the venom gland.</text>
</comment>
<comment type="domain">
    <text evidence="5">Has the structural arrangement of an alpha-helix connected to antiparallel beta-sheets by disulfide bonds (CS-alpha/beta).</text>
</comment>
<comment type="PTM">
    <text evidence="5">Contains 4 disulfide bonds.</text>
</comment>
<comment type="similarity">
    <text evidence="5">Belongs to the short scorpion toxin superfamily. Potassium channel inhibitor family. Alpha-KTx 27 subfamily.</text>
</comment>
<dbReference type="EMBL" id="FJ360833">
    <property type="protein sequence ID" value="ACJ23153.1"/>
    <property type="molecule type" value="mRNA"/>
</dbReference>
<dbReference type="SMR" id="B8XH44"/>
<dbReference type="GO" id="GO:0005576">
    <property type="term" value="C:extracellular region"/>
    <property type="evidence" value="ECO:0007669"/>
    <property type="project" value="UniProtKB-SubCell"/>
</dbReference>
<dbReference type="GO" id="GO:0008200">
    <property type="term" value="F:ion channel inhibitor activity"/>
    <property type="evidence" value="ECO:0007669"/>
    <property type="project" value="InterPro"/>
</dbReference>
<dbReference type="Gene3D" id="3.30.30.10">
    <property type="entry name" value="Knottin, scorpion toxin-like"/>
    <property type="match status" value="1"/>
</dbReference>
<dbReference type="InterPro" id="IPR036574">
    <property type="entry name" value="Scorpion_toxin-like_sf"/>
</dbReference>
<dbReference type="InterPro" id="IPR001947">
    <property type="entry name" value="Scorpion_toxinS_K_inh"/>
</dbReference>
<dbReference type="Pfam" id="PF00451">
    <property type="entry name" value="Toxin_2"/>
    <property type="match status" value="1"/>
</dbReference>
<dbReference type="SUPFAM" id="SSF57095">
    <property type="entry name" value="Scorpion toxin-like"/>
    <property type="match status" value="1"/>
</dbReference>
<dbReference type="PROSITE" id="PS01138">
    <property type="entry name" value="SCORP_SHORT_TOXIN"/>
    <property type="match status" value="1"/>
</dbReference>
<sequence>MKFLFLTLFVCCFIAVLVIPSEAQIDINVSCRYGSDCAEPCKRLKCLLPSKCINGKCTCYPSIKIKNCKVQTY</sequence>
<protein>
    <recommendedName>
        <fullName evidence="3">Potassium channel toxin alpha-KTx 27.1</fullName>
    </recommendedName>
    <alternativeName>
        <fullName evidence="4">Toxin BoiTx771</fullName>
        <shortName evidence="4">Toxin Tx771</shortName>
    </alternativeName>
</protein>
<evidence type="ECO:0000250" key="1"/>
<evidence type="ECO:0000255" key="2"/>
<evidence type="ECO:0000303" key="3">
    <source>
    </source>
</evidence>
<evidence type="ECO:0000303" key="4">
    <source ref="1"/>
</evidence>
<evidence type="ECO:0000305" key="5"/>
<proteinExistence type="inferred from homology"/>
<organism>
    <name type="scientific">Buthus israelis</name>
    <name type="common">Israeli scorpion</name>
    <name type="synonym">Buthus occitanus israelis</name>
    <dbReference type="NCBI Taxonomy" id="2899555"/>
    <lineage>
        <taxon>Eukaryota</taxon>
        <taxon>Metazoa</taxon>
        <taxon>Ecdysozoa</taxon>
        <taxon>Arthropoda</taxon>
        <taxon>Chelicerata</taxon>
        <taxon>Arachnida</taxon>
        <taxon>Scorpiones</taxon>
        <taxon>Buthida</taxon>
        <taxon>Buthoidea</taxon>
        <taxon>Buthidae</taxon>
        <taxon>Buthus</taxon>
    </lineage>
</organism>
<feature type="signal peptide" evidence="2">
    <location>
        <begin position="1"/>
        <end position="23"/>
    </location>
</feature>
<feature type="chain" id="PRO_0000433149" description="Potassium channel toxin alpha-KTx 27.1">
    <location>
        <begin position="24"/>
        <end position="73"/>
    </location>
</feature>